<proteinExistence type="inferred from homology"/>
<protein>
    <recommendedName>
        <fullName evidence="1">LexA repressor</fullName>
        <ecNumber evidence="1">3.4.21.88</ecNumber>
    </recommendedName>
</protein>
<dbReference type="EC" id="3.4.21.88" evidence="1"/>
<dbReference type="EMBL" id="AE017198">
    <property type="protein sequence ID" value="AAS09276.1"/>
    <property type="molecule type" value="Genomic_DNA"/>
</dbReference>
<dbReference type="RefSeq" id="WP_011162245.1">
    <property type="nucleotide sequence ID" value="NC_005362.1"/>
</dbReference>
<dbReference type="SMR" id="P61610"/>
<dbReference type="MEROPS" id="S24.001"/>
<dbReference type="GeneID" id="83570165"/>
<dbReference type="KEGG" id="ljo:LJ_1508"/>
<dbReference type="eggNOG" id="COG1974">
    <property type="taxonomic scope" value="Bacteria"/>
</dbReference>
<dbReference type="HOGENOM" id="CLU_066192_45_1_9"/>
<dbReference type="Proteomes" id="UP000000581">
    <property type="component" value="Chromosome"/>
</dbReference>
<dbReference type="GO" id="GO:0003677">
    <property type="term" value="F:DNA binding"/>
    <property type="evidence" value="ECO:0007669"/>
    <property type="project" value="UniProtKB-UniRule"/>
</dbReference>
<dbReference type="GO" id="GO:0004252">
    <property type="term" value="F:serine-type endopeptidase activity"/>
    <property type="evidence" value="ECO:0007669"/>
    <property type="project" value="UniProtKB-UniRule"/>
</dbReference>
<dbReference type="GO" id="GO:0006281">
    <property type="term" value="P:DNA repair"/>
    <property type="evidence" value="ECO:0007669"/>
    <property type="project" value="UniProtKB-UniRule"/>
</dbReference>
<dbReference type="GO" id="GO:0006260">
    <property type="term" value="P:DNA replication"/>
    <property type="evidence" value="ECO:0007669"/>
    <property type="project" value="UniProtKB-UniRule"/>
</dbReference>
<dbReference type="GO" id="GO:0045892">
    <property type="term" value="P:negative regulation of DNA-templated transcription"/>
    <property type="evidence" value="ECO:0007669"/>
    <property type="project" value="UniProtKB-UniRule"/>
</dbReference>
<dbReference type="GO" id="GO:0006508">
    <property type="term" value="P:proteolysis"/>
    <property type="evidence" value="ECO:0007669"/>
    <property type="project" value="InterPro"/>
</dbReference>
<dbReference type="GO" id="GO:0009432">
    <property type="term" value="P:SOS response"/>
    <property type="evidence" value="ECO:0007669"/>
    <property type="project" value="UniProtKB-UniRule"/>
</dbReference>
<dbReference type="CDD" id="cd00090">
    <property type="entry name" value="HTH_ARSR"/>
    <property type="match status" value="1"/>
</dbReference>
<dbReference type="CDD" id="cd06529">
    <property type="entry name" value="S24_LexA-like"/>
    <property type="match status" value="1"/>
</dbReference>
<dbReference type="FunFam" id="2.10.109.10:FF:000001">
    <property type="entry name" value="LexA repressor"/>
    <property type="match status" value="1"/>
</dbReference>
<dbReference type="Gene3D" id="2.10.109.10">
    <property type="entry name" value="Umud Fragment, subunit A"/>
    <property type="match status" value="1"/>
</dbReference>
<dbReference type="Gene3D" id="1.10.10.10">
    <property type="entry name" value="Winged helix-like DNA-binding domain superfamily/Winged helix DNA-binding domain"/>
    <property type="match status" value="1"/>
</dbReference>
<dbReference type="HAMAP" id="MF_00015">
    <property type="entry name" value="LexA"/>
    <property type="match status" value="1"/>
</dbReference>
<dbReference type="InterPro" id="IPR011991">
    <property type="entry name" value="ArsR-like_HTH"/>
</dbReference>
<dbReference type="InterPro" id="IPR006200">
    <property type="entry name" value="LexA"/>
</dbReference>
<dbReference type="InterPro" id="IPR039418">
    <property type="entry name" value="LexA-like"/>
</dbReference>
<dbReference type="InterPro" id="IPR036286">
    <property type="entry name" value="LexA/Signal_pep-like_sf"/>
</dbReference>
<dbReference type="InterPro" id="IPR006199">
    <property type="entry name" value="LexA_DNA-bd_dom"/>
</dbReference>
<dbReference type="InterPro" id="IPR050077">
    <property type="entry name" value="LexA_repressor"/>
</dbReference>
<dbReference type="InterPro" id="IPR006197">
    <property type="entry name" value="Peptidase_S24_LexA"/>
</dbReference>
<dbReference type="InterPro" id="IPR015927">
    <property type="entry name" value="Peptidase_S24_S26A/B/C"/>
</dbReference>
<dbReference type="InterPro" id="IPR036388">
    <property type="entry name" value="WH-like_DNA-bd_sf"/>
</dbReference>
<dbReference type="InterPro" id="IPR036390">
    <property type="entry name" value="WH_DNA-bd_sf"/>
</dbReference>
<dbReference type="NCBIfam" id="TIGR00498">
    <property type="entry name" value="lexA"/>
    <property type="match status" value="1"/>
</dbReference>
<dbReference type="PANTHER" id="PTHR33516">
    <property type="entry name" value="LEXA REPRESSOR"/>
    <property type="match status" value="1"/>
</dbReference>
<dbReference type="PANTHER" id="PTHR33516:SF2">
    <property type="entry name" value="LEXA REPRESSOR-RELATED"/>
    <property type="match status" value="1"/>
</dbReference>
<dbReference type="Pfam" id="PF01726">
    <property type="entry name" value="LexA_DNA_bind"/>
    <property type="match status" value="1"/>
</dbReference>
<dbReference type="Pfam" id="PF00717">
    <property type="entry name" value="Peptidase_S24"/>
    <property type="match status" value="1"/>
</dbReference>
<dbReference type="PRINTS" id="PR00726">
    <property type="entry name" value="LEXASERPTASE"/>
</dbReference>
<dbReference type="SUPFAM" id="SSF51306">
    <property type="entry name" value="LexA/Signal peptidase"/>
    <property type="match status" value="1"/>
</dbReference>
<dbReference type="SUPFAM" id="SSF46785">
    <property type="entry name" value="Winged helix' DNA-binding domain"/>
    <property type="match status" value="1"/>
</dbReference>
<evidence type="ECO:0000255" key="1">
    <source>
        <dbReference type="HAMAP-Rule" id="MF_00015"/>
    </source>
</evidence>
<comment type="function">
    <text evidence="1">Represses a number of genes involved in the response to DNA damage (SOS response), including recA and lexA. In the presence of single-stranded DNA, RecA interacts with LexA causing an autocatalytic cleavage which disrupts the DNA-binding part of LexA, leading to derepression of the SOS regulon and eventually DNA repair.</text>
</comment>
<comment type="catalytic activity">
    <reaction evidence="1">
        <text>Hydrolysis of Ala-|-Gly bond in repressor LexA.</text>
        <dbReference type="EC" id="3.4.21.88"/>
    </reaction>
</comment>
<comment type="subunit">
    <text evidence="1">Homodimer.</text>
</comment>
<comment type="similarity">
    <text evidence="1">Belongs to the peptidase S24 family.</text>
</comment>
<keyword id="KW-0068">Autocatalytic cleavage</keyword>
<keyword id="KW-0227">DNA damage</keyword>
<keyword id="KW-0234">DNA repair</keyword>
<keyword id="KW-0235">DNA replication</keyword>
<keyword id="KW-0238">DNA-binding</keyword>
<keyword id="KW-0378">Hydrolase</keyword>
<keyword id="KW-0678">Repressor</keyword>
<keyword id="KW-0742">SOS response</keyword>
<keyword id="KW-0804">Transcription</keyword>
<keyword id="KW-0805">Transcription regulation</keyword>
<name>LEXA_LACJO</name>
<gene>
    <name evidence="1" type="primary">lexA</name>
    <name type="ordered locus">LJ_1508</name>
</gene>
<organism>
    <name type="scientific">Lactobacillus johnsonii (strain CNCM I-12250 / La1 / NCC 533)</name>
    <dbReference type="NCBI Taxonomy" id="257314"/>
    <lineage>
        <taxon>Bacteria</taxon>
        <taxon>Bacillati</taxon>
        <taxon>Bacillota</taxon>
        <taxon>Bacilli</taxon>
        <taxon>Lactobacillales</taxon>
        <taxon>Lactobacillaceae</taxon>
        <taxon>Lactobacillus</taxon>
    </lineage>
</organism>
<feature type="chain" id="PRO_0000170046" description="LexA repressor">
    <location>
        <begin position="1"/>
        <end position="207"/>
    </location>
</feature>
<feature type="DNA-binding region" description="H-T-H motif" evidence="1">
    <location>
        <begin position="29"/>
        <end position="49"/>
    </location>
</feature>
<feature type="active site" description="For autocatalytic cleavage activity" evidence="1">
    <location>
        <position position="128"/>
    </location>
</feature>
<feature type="active site" description="For autocatalytic cleavage activity" evidence="1">
    <location>
        <position position="166"/>
    </location>
</feature>
<feature type="site" description="Cleavage; by autolysis" evidence="1">
    <location>
        <begin position="92"/>
        <end position="93"/>
    </location>
</feature>
<accession>P61610</accession>
<reference key="1">
    <citation type="journal article" date="2004" name="Proc. Natl. Acad. Sci. U.S.A.">
        <title>The genome sequence of the probiotic intestinal bacterium Lactobacillus johnsonii NCC 533.</title>
        <authorList>
            <person name="Pridmore R.D."/>
            <person name="Berger B."/>
            <person name="Desiere F."/>
            <person name="Vilanova D."/>
            <person name="Barretto C."/>
            <person name="Pittet A.-C."/>
            <person name="Zwahlen M.-C."/>
            <person name="Rouvet M."/>
            <person name="Altermann E."/>
            <person name="Barrangou R."/>
            <person name="Mollet B."/>
            <person name="Mercenier A."/>
            <person name="Klaenhammer T."/>
            <person name="Arigoni F."/>
            <person name="Schell M.A."/>
        </authorList>
    </citation>
    <scope>NUCLEOTIDE SEQUENCE [LARGE SCALE GENOMIC DNA]</scope>
    <source>
        <strain>CNCM I-1225 / La1 / NCC 533</strain>
    </source>
</reference>
<sequence>MTEPHANKQLEILRFIYDTVEERAFPPTVREICSAVDLSSTSTVHGHLARLEKKGYILKDATKPRAIEVTEKGREALGIKPKDIPVVGVVTAGQPILAVQDIDEYFPLPPDLENDAGELFMLRVHGESMINAGILNGDHVIVRKQSSANNGEIVVAMTEDNEATVKRFFKEDGYYRLQPENDTMDPIILPVVQILGKVVGLYRNNID</sequence>